<accession>Q7C0D0</accession>
<accession>Q83K07</accession>
<name>GRPE_SHIFL</name>
<comment type="function">
    <text evidence="1">Participates actively in the response to hyperosmotic and heat shock by preventing the aggregation of stress-denatured proteins, in association with DnaK and GrpE. It is the nucleotide exchange factor for DnaK and may function as a thermosensor. Unfolded proteins bind initially to DnaJ; upon interaction with the DnaJ-bound protein, DnaK hydrolyzes its bound ATP, resulting in the formation of a stable complex. GrpE releases ADP from DnaK; ATP binding to DnaK triggers the release of the substrate protein, thus completing the reaction cycle. Several rounds of ATP-dependent interactions between DnaJ, DnaK and GrpE are required for fully efficient folding.</text>
</comment>
<comment type="subunit">
    <text evidence="1">Homodimer.</text>
</comment>
<comment type="subcellular location">
    <subcellularLocation>
        <location evidence="1">Cytoplasm</location>
    </subcellularLocation>
</comment>
<comment type="similarity">
    <text evidence="1">Belongs to the GrpE family.</text>
</comment>
<sequence>MSSKEQKTPEGQAPEEIIMDQHEEIEAVEPEASAEQVDPRDEKIANLEAQLAEAQTRERDGILRVKAEMENLRRRTELDIEKAHKFALEKFINELLPVIDSLDRALEVADKANPDMSAMVEGIELTLKSMLDVVRKFGVEVIAETNVPLDPNVHQAIAMVESDDVAPGNVLGIMQKGYTLNGRTIRAAMVTVAKAKA</sequence>
<keyword id="KW-0143">Chaperone</keyword>
<keyword id="KW-0963">Cytoplasm</keyword>
<keyword id="KW-1185">Reference proteome</keyword>
<keyword id="KW-0346">Stress response</keyword>
<dbReference type="EMBL" id="AE005674">
    <property type="protein sequence ID" value="AAN44168.1"/>
    <property type="molecule type" value="Genomic_DNA"/>
</dbReference>
<dbReference type="EMBL" id="AE014073">
    <property type="protein sequence ID" value="AAP17993.1"/>
    <property type="molecule type" value="Genomic_DNA"/>
</dbReference>
<dbReference type="RefSeq" id="NP_708461.1">
    <property type="nucleotide sequence ID" value="NC_004337.2"/>
</dbReference>
<dbReference type="RefSeq" id="WP_001296310.1">
    <property type="nucleotide sequence ID" value="NZ_WPGW01000074.1"/>
</dbReference>
<dbReference type="SMR" id="Q7C0D0"/>
<dbReference type="STRING" id="198214.SF2673"/>
<dbReference type="PaxDb" id="198214-SF2673"/>
<dbReference type="GeneID" id="1027472"/>
<dbReference type="GeneID" id="93774463"/>
<dbReference type="KEGG" id="sfl:SF2673"/>
<dbReference type="KEGG" id="sfx:S2851"/>
<dbReference type="PATRIC" id="fig|198214.7.peg.3182"/>
<dbReference type="HOGENOM" id="CLU_057217_6_0_6"/>
<dbReference type="Proteomes" id="UP000001006">
    <property type="component" value="Chromosome"/>
</dbReference>
<dbReference type="Proteomes" id="UP000002673">
    <property type="component" value="Chromosome"/>
</dbReference>
<dbReference type="GO" id="GO:0005829">
    <property type="term" value="C:cytosol"/>
    <property type="evidence" value="ECO:0007669"/>
    <property type="project" value="TreeGrafter"/>
</dbReference>
<dbReference type="GO" id="GO:0000774">
    <property type="term" value="F:adenyl-nucleotide exchange factor activity"/>
    <property type="evidence" value="ECO:0007669"/>
    <property type="project" value="InterPro"/>
</dbReference>
<dbReference type="GO" id="GO:0042803">
    <property type="term" value="F:protein homodimerization activity"/>
    <property type="evidence" value="ECO:0007669"/>
    <property type="project" value="InterPro"/>
</dbReference>
<dbReference type="GO" id="GO:0051087">
    <property type="term" value="F:protein-folding chaperone binding"/>
    <property type="evidence" value="ECO:0007669"/>
    <property type="project" value="InterPro"/>
</dbReference>
<dbReference type="GO" id="GO:0051082">
    <property type="term" value="F:unfolded protein binding"/>
    <property type="evidence" value="ECO:0007669"/>
    <property type="project" value="TreeGrafter"/>
</dbReference>
<dbReference type="GO" id="GO:0006457">
    <property type="term" value="P:protein folding"/>
    <property type="evidence" value="ECO:0007669"/>
    <property type="project" value="InterPro"/>
</dbReference>
<dbReference type="CDD" id="cd00446">
    <property type="entry name" value="GrpE"/>
    <property type="match status" value="1"/>
</dbReference>
<dbReference type="FunFam" id="2.30.22.10:FF:000001">
    <property type="entry name" value="Protein GrpE"/>
    <property type="match status" value="1"/>
</dbReference>
<dbReference type="FunFam" id="3.90.20.20:FF:000001">
    <property type="entry name" value="Protein GrpE"/>
    <property type="match status" value="1"/>
</dbReference>
<dbReference type="Gene3D" id="3.90.20.20">
    <property type="match status" value="1"/>
</dbReference>
<dbReference type="Gene3D" id="2.30.22.10">
    <property type="entry name" value="Head domain of nucleotide exchange factor GrpE"/>
    <property type="match status" value="1"/>
</dbReference>
<dbReference type="HAMAP" id="MF_01151">
    <property type="entry name" value="GrpE"/>
    <property type="match status" value="1"/>
</dbReference>
<dbReference type="InterPro" id="IPR000740">
    <property type="entry name" value="GrpE"/>
</dbReference>
<dbReference type="InterPro" id="IPR013805">
    <property type="entry name" value="GrpE_coiled_coil"/>
</dbReference>
<dbReference type="InterPro" id="IPR009012">
    <property type="entry name" value="GrpE_head"/>
</dbReference>
<dbReference type="NCBIfam" id="NF007655">
    <property type="entry name" value="PRK10325.1"/>
    <property type="match status" value="1"/>
</dbReference>
<dbReference type="NCBIfam" id="NF010738">
    <property type="entry name" value="PRK14140.1"/>
    <property type="match status" value="1"/>
</dbReference>
<dbReference type="NCBIfam" id="NF010748">
    <property type="entry name" value="PRK14150.1"/>
    <property type="match status" value="1"/>
</dbReference>
<dbReference type="PANTHER" id="PTHR21237">
    <property type="entry name" value="GRPE PROTEIN"/>
    <property type="match status" value="1"/>
</dbReference>
<dbReference type="PANTHER" id="PTHR21237:SF23">
    <property type="entry name" value="GRPE PROTEIN HOMOLOG, MITOCHONDRIAL"/>
    <property type="match status" value="1"/>
</dbReference>
<dbReference type="Pfam" id="PF01025">
    <property type="entry name" value="GrpE"/>
    <property type="match status" value="1"/>
</dbReference>
<dbReference type="PRINTS" id="PR00773">
    <property type="entry name" value="GRPEPROTEIN"/>
</dbReference>
<dbReference type="SUPFAM" id="SSF58014">
    <property type="entry name" value="Coiled-coil domain of nucleotide exchange factor GrpE"/>
    <property type="match status" value="1"/>
</dbReference>
<dbReference type="SUPFAM" id="SSF51064">
    <property type="entry name" value="Head domain of nucleotide exchange factor GrpE"/>
    <property type="match status" value="1"/>
</dbReference>
<dbReference type="PROSITE" id="PS01071">
    <property type="entry name" value="GRPE"/>
    <property type="match status" value="1"/>
</dbReference>
<evidence type="ECO:0000255" key="1">
    <source>
        <dbReference type="HAMAP-Rule" id="MF_01151"/>
    </source>
</evidence>
<evidence type="ECO:0000256" key="2">
    <source>
        <dbReference type="SAM" id="MobiDB-lite"/>
    </source>
</evidence>
<feature type="chain" id="PRO_0000113853" description="Protein GrpE">
    <location>
        <begin position="1"/>
        <end position="197"/>
    </location>
</feature>
<feature type="region of interest" description="Disordered" evidence="2">
    <location>
        <begin position="1"/>
        <end position="39"/>
    </location>
</feature>
<proteinExistence type="inferred from homology"/>
<gene>
    <name evidence="1" type="primary">grpE</name>
    <name type="ordered locus">SF2673</name>
    <name type="ordered locus">S2851</name>
</gene>
<protein>
    <recommendedName>
        <fullName evidence="1">Protein GrpE</fullName>
    </recommendedName>
    <alternativeName>
        <fullName evidence="1">HSP-70 cofactor</fullName>
    </alternativeName>
</protein>
<reference key="1">
    <citation type="journal article" date="2002" name="Nucleic Acids Res.">
        <title>Genome sequence of Shigella flexneri 2a: insights into pathogenicity through comparison with genomes of Escherichia coli K12 and O157.</title>
        <authorList>
            <person name="Jin Q."/>
            <person name="Yuan Z."/>
            <person name="Xu J."/>
            <person name="Wang Y."/>
            <person name="Shen Y."/>
            <person name="Lu W."/>
            <person name="Wang J."/>
            <person name="Liu H."/>
            <person name="Yang J."/>
            <person name="Yang F."/>
            <person name="Zhang X."/>
            <person name="Zhang J."/>
            <person name="Yang G."/>
            <person name="Wu H."/>
            <person name="Qu D."/>
            <person name="Dong J."/>
            <person name="Sun L."/>
            <person name="Xue Y."/>
            <person name="Zhao A."/>
            <person name="Gao Y."/>
            <person name="Zhu J."/>
            <person name="Kan B."/>
            <person name="Ding K."/>
            <person name="Chen S."/>
            <person name="Cheng H."/>
            <person name="Yao Z."/>
            <person name="He B."/>
            <person name="Chen R."/>
            <person name="Ma D."/>
            <person name="Qiang B."/>
            <person name="Wen Y."/>
            <person name="Hou Y."/>
            <person name="Yu J."/>
        </authorList>
    </citation>
    <scope>NUCLEOTIDE SEQUENCE [LARGE SCALE GENOMIC DNA]</scope>
    <source>
        <strain>301 / Serotype 2a</strain>
    </source>
</reference>
<reference key="2">
    <citation type="journal article" date="2003" name="Infect. Immun.">
        <title>Complete genome sequence and comparative genomics of Shigella flexneri serotype 2a strain 2457T.</title>
        <authorList>
            <person name="Wei J."/>
            <person name="Goldberg M.B."/>
            <person name="Burland V."/>
            <person name="Venkatesan M.M."/>
            <person name="Deng W."/>
            <person name="Fournier G."/>
            <person name="Mayhew G.F."/>
            <person name="Plunkett G. III"/>
            <person name="Rose D.J."/>
            <person name="Darling A."/>
            <person name="Mau B."/>
            <person name="Perna N.T."/>
            <person name="Payne S.M."/>
            <person name="Runyen-Janecky L.J."/>
            <person name="Zhou S."/>
            <person name="Schwartz D.C."/>
            <person name="Blattner F.R."/>
        </authorList>
    </citation>
    <scope>NUCLEOTIDE SEQUENCE [LARGE SCALE GENOMIC DNA]</scope>
    <source>
        <strain>ATCC 700930 / 2457T / Serotype 2a</strain>
    </source>
</reference>
<organism>
    <name type="scientific">Shigella flexneri</name>
    <dbReference type="NCBI Taxonomy" id="623"/>
    <lineage>
        <taxon>Bacteria</taxon>
        <taxon>Pseudomonadati</taxon>
        <taxon>Pseudomonadota</taxon>
        <taxon>Gammaproteobacteria</taxon>
        <taxon>Enterobacterales</taxon>
        <taxon>Enterobacteriaceae</taxon>
        <taxon>Shigella</taxon>
    </lineage>
</organism>